<sequence length="429" mass="46248">MNILIIGNGGREHALAWKVAQSPLADKVFVAPGNAGTALEHKVENVNISATDIPALVKFAQDKQIGLTIVGPEAPLVIGVVDAFREAGLKIFGPAKAAAQLEGSKAFTKDFLARHKIPTAEYQNFTEVEPALTYLREKGTPIVVKADGLAAGKGVIVAMTLQEAEDAVRDMLSGNAFGEAGSRVVIEEFLDGEEASFIVMVDGKNVEPMASSQDHKRVGENDTGLNTGGMGAYSPAPVITPEIHSRIMKEVIYPTVNGMAAEGNVYTGFLYAGLMIMPNGQPKVIEFNCRFGDPETQPIMLRLKSDLVELCLKACDGKLDEVISQWDLRASLGIVLAAEGYPKDYRKGDEISGLPKSAVKNEKVFLAGVAEQEGKLVTNGGRVLCVTALGESVFEAQQKALKLAEQIQWSGRFYRRDIGYRAVERELQK</sequence>
<comment type="catalytic activity">
    <reaction evidence="2">
        <text>5-phospho-beta-D-ribosylamine + glycine + ATP = N(1)-(5-phospho-beta-D-ribosyl)glycinamide + ADP + phosphate + H(+)</text>
        <dbReference type="Rhea" id="RHEA:17453"/>
        <dbReference type="ChEBI" id="CHEBI:15378"/>
        <dbReference type="ChEBI" id="CHEBI:30616"/>
        <dbReference type="ChEBI" id="CHEBI:43474"/>
        <dbReference type="ChEBI" id="CHEBI:57305"/>
        <dbReference type="ChEBI" id="CHEBI:58681"/>
        <dbReference type="ChEBI" id="CHEBI:143788"/>
        <dbReference type="ChEBI" id="CHEBI:456216"/>
        <dbReference type="EC" id="6.3.4.13"/>
    </reaction>
</comment>
<comment type="cofactor">
    <cofactor evidence="1">
        <name>Mg(2+)</name>
        <dbReference type="ChEBI" id="CHEBI:18420"/>
    </cofactor>
    <cofactor evidence="1">
        <name>Mn(2+)</name>
        <dbReference type="ChEBI" id="CHEBI:29035"/>
    </cofactor>
    <text evidence="1">Binds 1 Mg(2+) or Mn(2+) ion per subunit.</text>
</comment>
<comment type="pathway">
    <text evidence="2">Purine metabolism; IMP biosynthesis via de novo pathway; N(1)-(5-phospho-D-ribosyl)glycinamide from 5-phospho-alpha-D-ribose 1-diphosphate: step 2/2.</text>
</comment>
<comment type="similarity">
    <text evidence="2">Belongs to the GARS family.</text>
</comment>
<reference key="1">
    <citation type="journal article" date="1995" name="Science">
        <title>Whole-genome random sequencing and assembly of Haemophilus influenzae Rd.</title>
        <authorList>
            <person name="Fleischmann R.D."/>
            <person name="Adams M.D."/>
            <person name="White O."/>
            <person name="Clayton R.A."/>
            <person name="Kirkness E.F."/>
            <person name="Kerlavage A.R."/>
            <person name="Bult C.J."/>
            <person name="Tomb J.-F."/>
            <person name="Dougherty B.A."/>
            <person name="Merrick J.M."/>
            <person name="McKenney K."/>
            <person name="Sutton G.G."/>
            <person name="FitzHugh W."/>
            <person name="Fields C.A."/>
            <person name="Gocayne J.D."/>
            <person name="Scott J.D."/>
            <person name="Shirley R."/>
            <person name="Liu L.-I."/>
            <person name="Glodek A."/>
            <person name="Kelley J.M."/>
            <person name="Weidman J.F."/>
            <person name="Phillips C.A."/>
            <person name="Spriggs T."/>
            <person name="Hedblom E."/>
            <person name="Cotton M.D."/>
            <person name="Utterback T.R."/>
            <person name="Hanna M.C."/>
            <person name="Nguyen D.T."/>
            <person name="Saudek D.M."/>
            <person name="Brandon R.C."/>
            <person name="Fine L.D."/>
            <person name="Fritchman J.L."/>
            <person name="Fuhrmann J.L."/>
            <person name="Geoghagen N.S.M."/>
            <person name="Gnehm C.L."/>
            <person name="McDonald L.A."/>
            <person name="Small K.V."/>
            <person name="Fraser C.M."/>
            <person name="Smith H.O."/>
            <person name="Venter J.C."/>
        </authorList>
    </citation>
    <scope>NUCLEOTIDE SEQUENCE [LARGE SCALE GENOMIC DNA]</scope>
    <source>
        <strain>ATCC 51907 / DSM 11121 / KW20 / Rd</strain>
    </source>
</reference>
<gene>
    <name evidence="2" type="primary">purD</name>
    <name type="ordered locus">HI_0888</name>
</gene>
<proteinExistence type="inferred from homology"/>
<dbReference type="EC" id="6.3.4.13" evidence="2"/>
<dbReference type="EMBL" id="L42023">
    <property type="protein sequence ID" value="AAC22545.1"/>
    <property type="molecule type" value="Genomic_DNA"/>
</dbReference>
<dbReference type="PIR" id="C64100">
    <property type="entry name" value="C64100"/>
</dbReference>
<dbReference type="RefSeq" id="NP_439049.1">
    <property type="nucleotide sequence ID" value="NC_000907.1"/>
</dbReference>
<dbReference type="SMR" id="P43845"/>
<dbReference type="STRING" id="71421.HI_0888"/>
<dbReference type="EnsemblBacteria" id="AAC22545">
    <property type="protein sequence ID" value="AAC22545"/>
    <property type="gene ID" value="HI_0888"/>
</dbReference>
<dbReference type="KEGG" id="hin:HI_0888"/>
<dbReference type="PATRIC" id="fig|71421.8.peg.930"/>
<dbReference type="eggNOG" id="COG0151">
    <property type="taxonomic scope" value="Bacteria"/>
</dbReference>
<dbReference type="HOGENOM" id="CLU_027420_3_1_6"/>
<dbReference type="OrthoDB" id="9807240at2"/>
<dbReference type="PhylomeDB" id="P43845"/>
<dbReference type="BioCyc" id="HINF71421:G1GJ1-928-MONOMER"/>
<dbReference type="UniPathway" id="UPA00074">
    <property type="reaction ID" value="UER00125"/>
</dbReference>
<dbReference type="Proteomes" id="UP000000579">
    <property type="component" value="Chromosome"/>
</dbReference>
<dbReference type="GO" id="GO:0005524">
    <property type="term" value="F:ATP binding"/>
    <property type="evidence" value="ECO:0007669"/>
    <property type="project" value="UniProtKB-KW"/>
</dbReference>
<dbReference type="GO" id="GO:0046872">
    <property type="term" value="F:metal ion binding"/>
    <property type="evidence" value="ECO:0007669"/>
    <property type="project" value="UniProtKB-KW"/>
</dbReference>
<dbReference type="GO" id="GO:0004637">
    <property type="term" value="F:phosphoribosylamine-glycine ligase activity"/>
    <property type="evidence" value="ECO:0007669"/>
    <property type="project" value="UniProtKB-UniRule"/>
</dbReference>
<dbReference type="GO" id="GO:0006189">
    <property type="term" value="P:'de novo' IMP biosynthetic process"/>
    <property type="evidence" value="ECO:0007669"/>
    <property type="project" value="UniProtKB-UniRule"/>
</dbReference>
<dbReference type="GO" id="GO:0009113">
    <property type="term" value="P:purine nucleobase biosynthetic process"/>
    <property type="evidence" value="ECO:0007669"/>
    <property type="project" value="InterPro"/>
</dbReference>
<dbReference type="FunFam" id="3.30.470.20:FF:000031">
    <property type="entry name" value="Phosphoribosylamine--glycine ligase"/>
    <property type="match status" value="1"/>
</dbReference>
<dbReference type="FunFam" id="3.40.50.20:FF:000006">
    <property type="entry name" value="Phosphoribosylamine--glycine ligase, chloroplastic"/>
    <property type="match status" value="1"/>
</dbReference>
<dbReference type="FunFam" id="3.30.1490.20:FF:000006">
    <property type="entry name" value="phosphoribosylamine--glycine ligase, chloroplastic-like"/>
    <property type="match status" value="1"/>
</dbReference>
<dbReference type="FunFam" id="3.90.600.10:FF:000001">
    <property type="entry name" value="Trifunctional purine biosynthetic protein adenosine-3"/>
    <property type="match status" value="1"/>
</dbReference>
<dbReference type="Gene3D" id="3.40.50.20">
    <property type="match status" value="1"/>
</dbReference>
<dbReference type="Gene3D" id="3.30.1490.20">
    <property type="entry name" value="ATP-grasp fold, A domain"/>
    <property type="match status" value="1"/>
</dbReference>
<dbReference type="Gene3D" id="3.30.470.20">
    <property type="entry name" value="ATP-grasp fold, B domain"/>
    <property type="match status" value="1"/>
</dbReference>
<dbReference type="Gene3D" id="3.90.600.10">
    <property type="entry name" value="Phosphoribosylglycinamide synthetase, C-terminal domain"/>
    <property type="match status" value="1"/>
</dbReference>
<dbReference type="HAMAP" id="MF_00138">
    <property type="entry name" value="GARS"/>
    <property type="match status" value="1"/>
</dbReference>
<dbReference type="InterPro" id="IPR011761">
    <property type="entry name" value="ATP-grasp"/>
</dbReference>
<dbReference type="InterPro" id="IPR013815">
    <property type="entry name" value="ATP_grasp_subdomain_1"/>
</dbReference>
<dbReference type="InterPro" id="IPR016185">
    <property type="entry name" value="PreATP-grasp_dom_sf"/>
</dbReference>
<dbReference type="InterPro" id="IPR020561">
    <property type="entry name" value="PRibGlycinamid_synth_ATP-grasp"/>
</dbReference>
<dbReference type="InterPro" id="IPR000115">
    <property type="entry name" value="PRibGlycinamide_synth"/>
</dbReference>
<dbReference type="InterPro" id="IPR020560">
    <property type="entry name" value="PRibGlycinamide_synth_C-dom"/>
</dbReference>
<dbReference type="InterPro" id="IPR037123">
    <property type="entry name" value="PRibGlycinamide_synth_C_sf"/>
</dbReference>
<dbReference type="InterPro" id="IPR020559">
    <property type="entry name" value="PRibGlycinamide_synth_CS"/>
</dbReference>
<dbReference type="InterPro" id="IPR020562">
    <property type="entry name" value="PRibGlycinamide_synth_N"/>
</dbReference>
<dbReference type="InterPro" id="IPR011054">
    <property type="entry name" value="Rudment_hybrid_motif"/>
</dbReference>
<dbReference type="NCBIfam" id="TIGR00877">
    <property type="entry name" value="purD"/>
    <property type="match status" value="1"/>
</dbReference>
<dbReference type="PANTHER" id="PTHR43472">
    <property type="entry name" value="PHOSPHORIBOSYLAMINE--GLYCINE LIGASE"/>
    <property type="match status" value="1"/>
</dbReference>
<dbReference type="PANTHER" id="PTHR43472:SF1">
    <property type="entry name" value="PHOSPHORIBOSYLAMINE--GLYCINE LIGASE, CHLOROPLASTIC"/>
    <property type="match status" value="1"/>
</dbReference>
<dbReference type="Pfam" id="PF01071">
    <property type="entry name" value="GARS_A"/>
    <property type="match status" value="1"/>
</dbReference>
<dbReference type="Pfam" id="PF02843">
    <property type="entry name" value="GARS_C"/>
    <property type="match status" value="1"/>
</dbReference>
<dbReference type="Pfam" id="PF02844">
    <property type="entry name" value="GARS_N"/>
    <property type="match status" value="1"/>
</dbReference>
<dbReference type="SMART" id="SM01209">
    <property type="entry name" value="GARS_A"/>
    <property type="match status" value="1"/>
</dbReference>
<dbReference type="SMART" id="SM01210">
    <property type="entry name" value="GARS_C"/>
    <property type="match status" value="1"/>
</dbReference>
<dbReference type="SUPFAM" id="SSF56059">
    <property type="entry name" value="Glutathione synthetase ATP-binding domain-like"/>
    <property type="match status" value="1"/>
</dbReference>
<dbReference type="SUPFAM" id="SSF52440">
    <property type="entry name" value="PreATP-grasp domain"/>
    <property type="match status" value="1"/>
</dbReference>
<dbReference type="SUPFAM" id="SSF51246">
    <property type="entry name" value="Rudiment single hybrid motif"/>
    <property type="match status" value="1"/>
</dbReference>
<dbReference type="PROSITE" id="PS50975">
    <property type="entry name" value="ATP_GRASP"/>
    <property type="match status" value="1"/>
</dbReference>
<dbReference type="PROSITE" id="PS00184">
    <property type="entry name" value="GARS"/>
    <property type="match status" value="1"/>
</dbReference>
<organism>
    <name type="scientific">Haemophilus influenzae (strain ATCC 51907 / DSM 11121 / KW20 / Rd)</name>
    <dbReference type="NCBI Taxonomy" id="71421"/>
    <lineage>
        <taxon>Bacteria</taxon>
        <taxon>Pseudomonadati</taxon>
        <taxon>Pseudomonadota</taxon>
        <taxon>Gammaproteobacteria</taxon>
        <taxon>Pasteurellales</taxon>
        <taxon>Pasteurellaceae</taxon>
        <taxon>Haemophilus</taxon>
    </lineage>
</organism>
<evidence type="ECO:0000250" key="1"/>
<evidence type="ECO:0000255" key="2">
    <source>
        <dbReference type="HAMAP-Rule" id="MF_00138"/>
    </source>
</evidence>
<keyword id="KW-0067">ATP-binding</keyword>
<keyword id="KW-0436">Ligase</keyword>
<keyword id="KW-0460">Magnesium</keyword>
<keyword id="KW-0464">Manganese</keyword>
<keyword id="KW-0479">Metal-binding</keyword>
<keyword id="KW-0547">Nucleotide-binding</keyword>
<keyword id="KW-0658">Purine biosynthesis</keyword>
<keyword id="KW-1185">Reference proteome</keyword>
<protein>
    <recommendedName>
        <fullName evidence="2">Phosphoribosylamine--glycine ligase</fullName>
        <ecNumber evidence="2">6.3.4.13</ecNumber>
    </recommendedName>
    <alternativeName>
        <fullName evidence="2">GARS</fullName>
    </alternativeName>
    <alternativeName>
        <fullName evidence="2">Glycinamide ribonucleotide synthetase</fullName>
    </alternativeName>
    <alternativeName>
        <fullName evidence="2">Phosphoribosylglycinamide synthetase</fullName>
    </alternativeName>
</protein>
<feature type="chain" id="PRO_0000151452" description="Phosphoribosylamine--glycine ligase">
    <location>
        <begin position="1"/>
        <end position="429"/>
    </location>
</feature>
<feature type="domain" description="ATP-grasp" evidence="2">
    <location>
        <begin position="109"/>
        <end position="316"/>
    </location>
</feature>
<feature type="binding site" evidence="2">
    <location>
        <begin position="135"/>
        <end position="196"/>
    </location>
    <ligand>
        <name>ATP</name>
        <dbReference type="ChEBI" id="CHEBI:30616"/>
    </ligand>
</feature>
<feature type="binding site" evidence="2">
    <location>
        <position position="286"/>
    </location>
    <ligand>
        <name>Mg(2+)</name>
        <dbReference type="ChEBI" id="CHEBI:18420"/>
    </ligand>
</feature>
<feature type="binding site" evidence="2">
    <location>
        <position position="288"/>
    </location>
    <ligand>
        <name>Mg(2+)</name>
        <dbReference type="ChEBI" id="CHEBI:18420"/>
    </ligand>
</feature>
<accession>P43845</accession>
<name>PUR2_HAEIN</name>